<comment type="function">
    <text evidence="2">Involved in the synthesis of alkyl hydroxycinnamates in root waxes. Functions as a fatty alcohol:hydroxy cinnamoyl-CoA acyltransferase with apparent preference for caffeoyl-CoA.</text>
</comment>
<comment type="tissue specificity">
    <text evidence="2">Expressed in the outermost circumference of mature roots, the endodermis of young roots and in the seed coat of developing seeds. Expressed in outer integument layer 1 of the seed coat.</text>
</comment>
<comment type="similarity">
    <text evidence="4">Belongs to the plant acyltransferase family.</text>
</comment>
<accession>Q9FFQ7</accession>
<accession>Q8LE88</accession>
<proteinExistence type="evidence at transcript level"/>
<feature type="chain" id="PRO_0000440781" description="Fatty alcohol:caffeoyl-CoA acyltransferase">
    <location>
        <begin position="1"/>
        <end position="426"/>
    </location>
</feature>
<feature type="active site" description="Proton acceptor" evidence="1">
    <location>
        <position position="162"/>
    </location>
</feature>
<feature type="active site" description="Proton acceptor" evidence="1">
    <location>
        <position position="374"/>
    </location>
</feature>
<feature type="sequence conflict" description="In Ref. 4; AAM62785." evidence="4" ref="4">
    <original>K</original>
    <variation>N</variation>
    <location>
        <position position="404"/>
    </location>
</feature>
<name>FACT_ARATH</name>
<organism>
    <name type="scientific">Arabidopsis thaliana</name>
    <name type="common">Mouse-ear cress</name>
    <dbReference type="NCBI Taxonomy" id="3702"/>
    <lineage>
        <taxon>Eukaryota</taxon>
        <taxon>Viridiplantae</taxon>
        <taxon>Streptophyta</taxon>
        <taxon>Embryophyta</taxon>
        <taxon>Tracheophyta</taxon>
        <taxon>Spermatophyta</taxon>
        <taxon>Magnoliopsida</taxon>
        <taxon>eudicotyledons</taxon>
        <taxon>Gunneridae</taxon>
        <taxon>Pentapetalae</taxon>
        <taxon>rosids</taxon>
        <taxon>malvids</taxon>
        <taxon>Brassicales</taxon>
        <taxon>Brassicaceae</taxon>
        <taxon>Camelineae</taxon>
        <taxon>Arabidopsis</taxon>
    </lineage>
</organism>
<keyword id="KW-0012">Acyltransferase</keyword>
<keyword id="KW-0961">Cell wall biogenesis/degradation</keyword>
<keyword id="KW-1185">Reference proteome</keyword>
<keyword id="KW-0808">Transferase</keyword>
<gene>
    <name evidence="3" type="primary">FACT</name>
    <name evidence="5" type="ordered locus">At5g63560</name>
    <name evidence="6" type="ORF">MBK5.2</name>
</gene>
<evidence type="ECO:0000250" key="1">
    <source>
        <dbReference type="UniProtKB" id="Q9FI78"/>
    </source>
</evidence>
<evidence type="ECO:0000269" key="2">
    <source>
    </source>
</evidence>
<evidence type="ECO:0000303" key="3">
    <source>
    </source>
</evidence>
<evidence type="ECO:0000305" key="4"/>
<evidence type="ECO:0000312" key="5">
    <source>
        <dbReference type="Araport" id="AT5G63560"/>
    </source>
</evidence>
<evidence type="ECO:0000312" key="6">
    <source>
        <dbReference type="EMBL" id="BAB10449.1"/>
    </source>
</evidence>
<reference key="1">
    <citation type="journal article" date="1997" name="DNA Res.">
        <title>Structural analysis of Arabidopsis thaliana chromosome 5. I. Sequence features of the 1.6 Mb regions covered by twenty physically assigned P1 clones.</title>
        <authorList>
            <person name="Sato S."/>
            <person name="Kotani H."/>
            <person name="Nakamura Y."/>
            <person name="Kaneko T."/>
            <person name="Asamizu E."/>
            <person name="Fukami M."/>
            <person name="Miyajima N."/>
            <person name="Tabata S."/>
        </authorList>
    </citation>
    <scope>NUCLEOTIDE SEQUENCE [LARGE SCALE GENOMIC DNA]</scope>
    <source>
        <strain>cv. Columbia</strain>
    </source>
</reference>
<reference key="2">
    <citation type="journal article" date="2017" name="Plant J.">
        <title>Araport11: a complete reannotation of the Arabidopsis thaliana reference genome.</title>
        <authorList>
            <person name="Cheng C.Y."/>
            <person name="Krishnakumar V."/>
            <person name="Chan A.P."/>
            <person name="Thibaud-Nissen F."/>
            <person name="Schobel S."/>
            <person name="Town C.D."/>
        </authorList>
    </citation>
    <scope>GENOME REANNOTATION</scope>
    <source>
        <strain>cv. Columbia</strain>
    </source>
</reference>
<reference key="3">
    <citation type="journal article" date="2003" name="Science">
        <title>Empirical analysis of transcriptional activity in the Arabidopsis genome.</title>
        <authorList>
            <person name="Yamada K."/>
            <person name="Lim J."/>
            <person name="Dale J.M."/>
            <person name="Chen H."/>
            <person name="Shinn P."/>
            <person name="Palm C.J."/>
            <person name="Southwick A.M."/>
            <person name="Wu H.C."/>
            <person name="Kim C.J."/>
            <person name="Nguyen M."/>
            <person name="Pham P.K."/>
            <person name="Cheuk R.F."/>
            <person name="Karlin-Newmann G."/>
            <person name="Liu S.X."/>
            <person name="Lam B."/>
            <person name="Sakano H."/>
            <person name="Wu T."/>
            <person name="Yu G."/>
            <person name="Miranda M."/>
            <person name="Quach H.L."/>
            <person name="Tripp M."/>
            <person name="Chang C.H."/>
            <person name="Lee J.M."/>
            <person name="Toriumi M.J."/>
            <person name="Chan M.M."/>
            <person name="Tang C.C."/>
            <person name="Onodera C.S."/>
            <person name="Deng J.M."/>
            <person name="Akiyama K."/>
            <person name="Ansari Y."/>
            <person name="Arakawa T."/>
            <person name="Banh J."/>
            <person name="Banno F."/>
            <person name="Bowser L."/>
            <person name="Brooks S.Y."/>
            <person name="Carninci P."/>
            <person name="Chao Q."/>
            <person name="Choy N."/>
            <person name="Enju A."/>
            <person name="Goldsmith A.D."/>
            <person name="Gurjal M."/>
            <person name="Hansen N.F."/>
            <person name="Hayashizaki Y."/>
            <person name="Johnson-Hopson C."/>
            <person name="Hsuan V.W."/>
            <person name="Iida K."/>
            <person name="Karnes M."/>
            <person name="Khan S."/>
            <person name="Koesema E."/>
            <person name="Ishida J."/>
            <person name="Jiang P.X."/>
            <person name="Jones T."/>
            <person name="Kawai J."/>
            <person name="Kamiya A."/>
            <person name="Meyers C."/>
            <person name="Nakajima M."/>
            <person name="Narusaka M."/>
            <person name="Seki M."/>
            <person name="Sakurai T."/>
            <person name="Satou M."/>
            <person name="Tamse R."/>
            <person name="Vaysberg M."/>
            <person name="Wallender E.K."/>
            <person name="Wong C."/>
            <person name="Yamamura Y."/>
            <person name="Yuan S."/>
            <person name="Shinozaki K."/>
            <person name="Davis R.W."/>
            <person name="Theologis A."/>
            <person name="Ecker J.R."/>
        </authorList>
    </citation>
    <scope>NUCLEOTIDE SEQUENCE [LARGE SCALE MRNA]</scope>
    <source>
        <strain>cv. Columbia</strain>
    </source>
</reference>
<reference key="4">
    <citation type="submission" date="2002-03" db="EMBL/GenBank/DDBJ databases">
        <title>Full-length cDNA from Arabidopsis thaliana.</title>
        <authorList>
            <person name="Brover V.V."/>
            <person name="Troukhan M.E."/>
            <person name="Alexandrov N.A."/>
            <person name="Lu Y.-P."/>
            <person name="Flavell R.B."/>
            <person name="Feldmann K.A."/>
        </authorList>
    </citation>
    <scope>NUCLEOTIDE SEQUENCE [LARGE SCALE MRNA]</scope>
</reference>
<reference key="5">
    <citation type="journal article" date="2012" name="Plant Physiol.">
        <title>Identification of an Arabidopsis fatty alcohol:caffeoyl-Coenzyme A acyltransferase required for the synthesis of alkyl hydroxycinnamates in root waxes.</title>
        <authorList>
            <person name="Kosma D.K."/>
            <person name="Molina I."/>
            <person name="Ohlrogge J.B."/>
            <person name="Pollard M."/>
        </authorList>
    </citation>
    <scope>FUNCTION</scope>
    <scope>TISSUE SPECIFICITY</scope>
</reference>
<dbReference type="EC" id="2.3.1.-" evidence="4"/>
<dbReference type="EMBL" id="AB005234">
    <property type="protein sequence ID" value="BAB10449.1"/>
    <property type="molecule type" value="Genomic_DNA"/>
</dbReference>
<dbReference type="EMBL" id="CP002688">
    <property type="protein sequence ID" value="AED97769.1"/>
    <property type="molecule type" value="Genomic_DNA"/>
</dbReference>
<dbReference type="EMBL" id="AY035105">
    <property type="protein sequence ID" value="AAK59610.1"/>
    <property type="molecule type" value="mRNA"/>
</dbReference>
<dbReference type="EMBL" id="AY142537">
    <property type="protein sequence ID" value="AAN13119.1"/>
    <property type="molecule type" value="mRNA"/>
</dbReference>
<dbReference type="EMBL" id="AY085563">
    <property type="protein sequence ID" value="AAM62785.1"/>
    <property type="molecule type" value="mRNA"/>
</dbReference>
<dbReference type="RefSeq" id="NP_201161.1">
    <property type="nucleotide sequence ID" value="NM_125751.3"/>
</dbReference>
<dbReference type="SMR" id="Q9FFQ7"/>
<dbReference type="FunCoup" id="Q9FFQ7">
    <property type="interactions" value="22"/>
</dbReference>
<dbReference type="STRING" id="3702.Q9FFQ7"/>
<dbReference type="iPTMnet" id="Q9FFQ7"/>
<dbReference type="PaxDb" id="3702-AT5G63560.1"/>
<dbReference type="ProteomicsDB" id="222443"/>
<dbReference type="EnsemblPlants" id="AT5G63560.1">
    <property type="protein sequence ID" value="AT5G63560.1"/>
    <property type="gene ID" value="AT5G63560"/>
</dbReference>
<dbReference type="GeneID" id="836475"/>
<dbReference type="Gramene" id="AT5G63560.1">
    <property type="protein sequence ID" value="AT5G63560.1"/>
    <property type="gene ID" value="AT5G63560"/>
</dbReference>
<dbReference type="KEGG" id="ath:AT5G63560"/>
<dbReference type="Araport" id="AT5G63560"/>
<dbReference type="TAIR" id="AT5G63560">
    <property type="gene designation" value="FACT"/>
</dbReference>
<dbReference type="eggNOG" id="ENOG502QS3E">
    <property type="taxonomic scope" value="Eukaryota"/>
</dbReference>
<dbReference type="HOGENOM" id="CLU_014546_2_0_1"/>
<dbReference type="InParanoid" id="Q9FFQ7"/>
<dbReference type="OMA" id="FHTIDFG"/>
<dbReference type="OrthoDB" id="671439at2759"/>
<dbReference type="PhylomeDB" id="Q9FFQ7"/>
<dbReference type="BioCyc" id="ARA:AT5G63560-MONOMER"/>
<dbReference type="PRO" id="PR:Q9FFQ7"/>
<dbReference type="Proteomes" id="UP000006548">
    <property type="component" value="Chromosome 5"/>
</dbReference>
<dbReference type="ExpressionAtlas" id="Q9FFQ7">
    <property type="expression patterns" value="baseline and differential"/>
</dbReference>
<dbReference type="GO" id="GO:0009536">
    <property type="term" value="C:plastid"/>
    <property type="evidence" value="ECO:0007005"/>
    <property type="project" value="TAIR"/>
</dbReference>
<dbReference type="GO" id="GO:0090430">
    <property type="term" value="F:caffeoyl-CoA: alcohol caffeoyl transferase activity"/>
    <property type="evidence" value="ECO:0000314"/>
    <property type="project" value="TAIR"/>
</dbReference>
<dbReference type="GO" id="GO:0090431">
    <property type="term" value="P:alkyl caffeate ester biosynthetic process"/>
    <property type="evidence" value="ECO:0000315"/>
    <property type="project" value="TAIR"/>
</dbReference>
<dbReference type="GO" id="GO:0071555">
    <property type="term" value="P:cell wall organization"/>
    <property type="evidence" value="ECO:0007669"/>
    <property type="project" value="UniProtKB-KW"/>
</dbReference>
<dbReference type="FunFam" id="3.30.559.10:FF:000015">
    <property type="entry name" value="Spermidine hydroxycinnamoyl transferase"/>
    <property type="match status" value="1"/>
</dbReference>
<dbReference type="FunFam" id="3.30.559.10:FF:000008">
    <property type="entry name" value="Tryptamine hydroxycinnamoyl transferase"/>
    <property type="match status" value="1"/>
</dbReference>
<dbReference type="Gene3D" id="3.30.559.10">
    <property type="entry name" value="Chloramphenicol acetyltransferase-like domain"/>
    <property type="match status" value="2"/>
</dbReference>
<dbReference type="InterPro" id="IPR023213">
    <property type="entry name" value="CAT-like_dom_sf"/>
</dbReference>
<dbReference type="InterPro" id="IPR050317">
    <property type="entry name" value="Plant_Fungal_Acyltransferase"/>
</dbReference>
<dbReference type="PANTHER" id="PTHR31642:SF310">
    <property type="entry name" value="FATTY ALCOHOL:CAFFEOYL-COA ACYLTRANSFERASE"/>
    <property type="match status" value="1"/>
</dbReference>
<dbReference type="PANTHER" id="PTHR31642">
    <property type="entry name" value="TRICHOTHECENE 3-O-ACETYLTRANSFERASE"/>
    <property type="match status" value="1"/>
</dbReference>
<dbReference type="Pfam" id="PF02458">
    <property type="entry name" value="Transferase"/>
    <property type="match status" value="1"/>
</dbReference>
<protein>
    <recommendedName>
        <fullName evidence="4">Fatty alcohol:caffeoyl-CoA acyltransferase</fullName>
        <ecNumber evidence="4">2.3.1.-</ecNumber>
    </recommendedName>
    <alternativeName>
        <fullName evidence="3">Fatty alcohol:caffeoyl-CoA caffeoyl transferase</fullName>
    </alternativeName>
</protein>
<sequence length="426" mass="47113">MADSFELIVTRKEPVLVSPASETPKGLHYLSNLDQNIAIIVKTFYYFKSNSRSNEESYEVIKKSLSEVLVHYYPAAGRLTISPEGKIAVDCTGEGVVVVEAEANCGIEKIKKAISEIDQPETLEKLVYDVPGARNILEIPPVVVQVTNFKCGGFVLGLGMNHNMFDGIAAMEFLNSWAETARGLPLSVPPFLDRTLLRPRTPPKIEFPHNEFEDLEDISGTGKLYSDEKLVYKSFLFGPEKLERLKIMAETRSTTFQTLTGFLWRARCQALGLKPDQRIKLLFAADGRSRFVPELPKGYSGNGIVFTYCVTTAGEVTLNPLSHSVCLVKRAVEMVNDGFMRSAIDYFEVTRARPSLTATLLITSWAKLSFHTKDFGWGEPVVSGPVGLPEKEVILFLPCGSDTKSINVLLGLPGSAMKVFQGIMDI</sequence>